<gene>
    <name type="ordered locus">lmo1568</name>
</gene>
<accession>Q8Y6W3</accession>
<keyword id="KW-1003">Cell membrane</keyword>
<keyword id="KW-0472">Membrane</keyword>
<keyword id="KW-1185">Reference proteome</keyword>
<keyword id="KW-0812">Transmembrane</keyword>
<keyword id="KW-1133">Transmembrane helix</keyword>
<comment type="subcellular location">
    <subcellularLocation>
        <location evidence="1">Cell membrane</location>
        <topology evidence="1">Multi-pass membrane protein</topology>
    </subcellularLocation>
</comment>
<comment type="similarity">
    <text evidence="1">Belongs to the UPF0756 family.</text>
</comment>
<feature type="chain" id="PRO_0000388901" description="UPF0756 membrane protein lmo1568">
    <location>
        <begin position="1"/>
        <end position="153"/>
    </location>
</feature>
<feature type="transmembrane region" description="Helical" evidence="1">
    <location>
        <begin position="6"/>
        <end position="26"/>
    </location>
</feature>
<feature type="transmembrane region" description="Helical" evidence="1">
    <location>
        <begin position="54"/>
        <end position="74"/>
    </location>
</feature>
<feature type="transmembrane region" description="Helical" evidence="1">
    <location>
        <begin position="80"/>
        <end position="100"/>
    </location>
</feature>
<feature type="transmembrane region" description="Helical" evidence="1">
    <location>
        <begin position="117"/>
        <end position="137"/>
    </location>
</feature>
<sequence length="153" mass="16042">MFTESMLFLLLFLLLGLIAKNNSLIIAVAVVILLKLFHVDGKVMEIIQAKGINWGVTIITVAILIPIATGQIGFKDLIDSFKSAAGWIGLGAGIAVSILAKKGVGYMAVDPQVTVSLVFGTILAVVLFRGIAAGPVIAAGIAYMAMQLVAFIK</sequence>
<protein>
    <recommendedName>
        <fullName evidence="1">UPF0756 membrane protein lmo1568</fullName>
    </recommendedName>
</protein>
<reference key="1">
    <citation type="journal article" date="2001" name="Science">
        <title>Comparative genomics of Listeria species.</title>
        <authorList>
            <person name="Glaser P."/>
            <person name="Frangeul L."/>
            <person name="Buchrieser C."/>
            <person name="Rusniok C."/>
            <person name="Amend A."/>
            <person name="Baquero F."/>
            <person name="Berche P."/>
            <person name="Bloecker H."/>
            <person name="Brandt P."/>
            <person name="Chakraborty T."/>
            <person name="Charbit A."/>
            <person name="Chetouani F."/>
            <person name="Couve E."/>
            <person name="de Daruvar A."/>
            <person name="Dehoux P."/>
            <person name="Domann E."/>
            <person name="Dominguez-Bernal G."/>
            <person name="Duchaud E."/>
            <person name="Durant L."/>
            <person name="Dussurget O."/>
            <person name="Entian K.-D."/>
            <person name="Fsihi H."/>
            <person name="Garcia-del Portillo F."/>
            <person name="Garrido P."/>
            <person name="Gautier L."/>
            <person name="Goebel W."/>
            <person name="Gomez-Lopez N."/>
            <person name="Hain T."/>
            <person name="Hauf J."/>
            <person name="Jackson D."/>
            <person name="Jones L.-M."/>
            <person name="Kaerst U."/>
            <person name="Kreft J."/>
            <person name="Kuhn M."/>
            <person name="Kunst F."/>
            <person name="Kurapkat G."/>
            <person name="Madueno E."/>
            <person name="Maitournam A."/>
            <person name="Mata Vicente J."/>
            <person name="Ng E."/>
            <person name="Nedjari H."/>
            <person name="Nordsiek G."/>
            <person name="Novella S."/>
            <person name="de Pablos B."/>
            <person name="Perez-Diaz J.-C."/>
            <person name="Purcell R."/>
            <person name="Remmel B."/>
            <person name="Rose M."/>
            <person name="Schlueter T."/>
            <person name="Simoes N."/>
            <person name="Tierrez A."/>
            <person name="Vazquez-Boland J.-A."/>
            <person name="Voss H."/>
            <person name="Wehland J."/>
            <person name="Cossart P."/>
        </authorList>
    </citation>
    <scope>NUCLEOTIDE SEQUENCE [LARGE SCALE GENOMIC DNA]</scope>
    <source>
        <strain>ATCC BAA-679 / EGD-e</strain>
    </source>
</reference>
<evidence type="ECO:0000255" key="1">
    <source>
        <dbReference type="HAMAP-Rule" id="MF_01874"/>
    </source>
</evidence>
<dbReference type="EMBL" id="AL591979">
    <property type="protein sequence ID" value="CAC99646.1"/>
    <property type="molecule type" value="Genomic_DNA"/>
</dbReference>
<dbReference type="PIR" id="AH1270">
    <property type="entry name" value="AH1270"/>
</dbReference>
<dbReference type="RefSeq" id="NP_465093.1">
    <property type="nucleotide sequence ID" value="NC_003210.1"/>
</dbReference>
<dbReference type="RefSeq" id="WP_003723252.1">
    <property type="nucleotide sequence ID" value="NZ_CP149495.1"/>
</dbReference>
<dbReference type="STRING" id="169963.gene:17594225"/>
<dbReference type="PaxDb" id="169963-lmo1568"/>
<dbReference type="DNASU" id="986923"/>
<dbReference type="EnsemblBacteria" id="CAC99646">
    <property type="protein sequence ID" value="CAC99646"/>
    <property type="gene ID" value="CAC99646"/>
</dbReference>
<dbReference type="GeneID" id="986923"/>
<dbReference type="KEGG" id="lmo:lmo1568"/>
<dbReference type="PATRIC" id="fig|169963.11.peg.1609"/>
<dbReference type="eggNOG" id="COG2707">
    <property type="taxonomic scope" value="Bacteria"/>
</dbReference>
<dbReference type="HOGENOM" id="CLU_125889_1_0_9"/>
<dbReference type="OrthoDB" id="80306at2"/>
<dbReference type="PhylomeDB" id="Q8Y6W3"/>
<dbReference type="BioCyc" id="LMON169963:LMO1568-MONOMER"/>
<dbReference type="Proteomes" id="UP000000817">
    <property type="component" value="Chromosome"/>
</dbReference>
<dbReference type="GO" id="GO:0005886">
    <property type="term" value="C:plasma membrane"/>
    <property type="evidence" value="ECO:0000318"/>
    <property type="project" value="GO_Central"/>
</dbReference>
<dbReference type="HAMAP" id="MF_01874">
    <property type="entry name" value="UPF0756"/>
    <property type="match status" value="1"/>
</dbReference>
<dbReference type="InterPro" id="IPR007382">
    <property type="entry name" value="UPF0756_TM"/>
</dbReference>
<dbReference type="PANTHER" id="PTHR38452">
    <property type="entry name" value="UPF0756 MEMBRANE PROTEIN YEAL"/>
    <property type="match status" value="1"/>
</dbReference>
<dbReference type="PANTHER" id="PTHR38452:SF1">
    <property type="entry name" value="UPF0756 MEMBRANE PROTEIN YEAL"/>
    <property type="match status" value="1"/>
</dbReference>
<dbReference type="Pfam" id="PF04284">
    <property type="entry name" value="DUF441"/>
    <property type="match status" value="1"/>
</dbReference>
<organism>
    <name type="scientific">Listeria monocytogenes serovar 1/2a (strain ATCC BAA-679 / EGD-e)</name>
    <dbReference type="NCBI Taxonomy" id="169963"/>
    <lineage>
        <taxon>Bacteria</taxon>
        <taxon>Bacillati</taxon>
        <taxon>Bacillota</taxon>
        <taxon>Bacilli</taxon>
        <taxon>Bacillales</taxon>
        <taxon>Listeriaceae</taxon>
        <taxon>Listeria</taxon>
    </lineage>
</organism>
<proteinExistence type="inferred from homology"/>
<name>Y1568_LISMO</name>